<keyword id="KW-0687">Ribonucleoprotein</keyword>
<keyword id="KW-0689">Ribosomal protein</keyword>
<keyword id="KW-0694">RNA-binding</keyword>
<keyword id="KW-0699">rRNA-binding</keyword>
<organism>
    <name type="scientific">Burkholderia vietnamiensis (strain G4 / LMG 22486)</name>
    <name type="common">Burkholderia cepacia (strain R1808)</name>
    <dbReference type="NCBI Taxonomy" id="269482"/>
    <lineage>
        <taxon>Bacteria</taxon>
        <taxon>Pseudomonadati</taxon>
        <taxon>Pseudomonadota</taxon>
        <taxon>Betaproteobacteria</taxon>
        <taxon>Burkholderiales</taxon>
        <taxon>Burkholderiaceae</taxon>
        <taxon>Burkholderia</taxon>
        <taxon>Burkholderia cepacia complex</taxon>
    </lineage>
</organism>
<gene>
    <name evidence="1" type="primary">rpsO</name>
    <name type="ordered locus">Bcep1808_2339</name>
</gene>
<reference key="1">
    <citation type="submission" date="2007-03" db="EMBL/GenBank/DDBJ databases">
        <title>Complete sequence of chromosome 1 of Burkholderia vietnamiensis G4.</title>
        <authorList>
            <consortium name="US DOE Joint Genome Institute"/>
            <person name="Copeland A."/>
            <person name="Lucas S."/>
            <person name="Lapidus A."/>
            <person name="Barry K."/>
            <person name="Detter J.C."/>
            <person name="Glavina del Rio T."/>
            <person name="Hammon N."/>
            <person name="Israni S."/>
            <person name="Dalin E."/>
            <person name="Tice H."/>
            <person name="Pitluck S."/>
            <person name="Chain P."/>
            <person name="Malfatti S."/>
            <person name="Shin M."/>
            <person name="Vergez L."/>
            <person name="Schmutz J."/>
            <person name="Larimer F."/>
            <person name="Land M."/>
            <person name="Hauser L."/>
            <person name="Kyrpides N."/>
            <person name="Tiedje J."/>
            <person name="Richardson P."/>
        </authorList>
    </citation>
    <scope>NUCLEOTIDE SEQUENCE [LARGE SCALE GENOMIC DNA]</scope>
    <source>
        <strain>G4 / LMG 22486</strain>
    </source>
</reference>
<name>RS15_BURVG</name>
<protein>
    <recommendedName>
        <fullName evidence="1">Small ribosomal subunit protein uS15</fullName>
    </recommendedName>
    <alternativeName>
        <fullName evidence="2">30S ribosomal protein S15</fullName>
    </alternativeName>
</protein>
<feature type="chain" id="PRO_1000054765" description="Small ribosomal subunit protein uS15">
    <location>
        <begin position="1"/>
        <end position="89"/>
    </location>
</feature>
<proteinExistence type="inferred from homology"/>
<dbReference type="EMBL" id="CP000614">
    <property type="protein sequence ID" value="ABO55338.1"/>
    <property type="molecule type" value="Genomic_DNA"/>
</dbReference>
<dbReference type="SMR" id="A4JGD5"/>
<dbReference type="KEGG" id="bvi:Bcep1808_2339"/>
<dbReference type="eggNOG" id="COG0184">
    <property type="taxonomic scope" value="Bacteria"/>
</dbReference>
<dbReference type="HOGENOM" id="CLU_148518_0_0_4"/>
<dbReference type="Proteomes" id="UP000002287">
    <property type="component" value="Chromosome 1"/>
</dbReference>
<dbReference type="GO" id="GO:0022627">
    <property type="term" value="C:cytosolic small ribosomal subunit"/>
    <property type="evidence" value="ECO:0007669"/>
    <property type="project" value="TreeGrafter"/>
</dbReference>
<dbReference type="GO" id="GO:0019843">
    <property type="term" value="F:rRNA binding"/>
    <property type="evidence" value="ECO:0007669"/>
    <property type="project" value="UniProtKB-UniRule"/>
</dbReference>
<dbReference type="GO" id="GO:0003735">
    <property type="term" value="F:structural constituent of ribosome"/>
    <property type="evidence" value="ECO:0007669"/>
    <property type="project" value="InterPro"/>
</dbReference>
<dbReference type="GO" id="GO:0006412">
    <property type="term" value="P:translation"/>
    <property type="evidence" value="ECO:0007669"/>
    <property type="project" value="UniProtKB-UniRule"/>
</dbReference>
<dbReference type="CDD" id="cd00353">
    <property type="entry name" value="Ribosomal_S15p_S13e"/>
    <property type="match status" value="1"/>
</dbReference>
<dbReference type="FunFam" id="1.10.287.10:FF:000002">
    <property type="entry name" value="30S ribosomal protein S15"/>
    <property type="match status" value="1"/>
</dbReference>
<dbReference type="Gene3D" id="6.10.250.3130">
    <property type="match status" value="1"/>
</dbReference>
<dbReference type="Gene3D" id="1.10.287.10">
    <property type="entry name" value="S15/NS1, RNA-binding"/>
    <property type="match status" value="1"/>
</dbReference>
<dbReference type="HAMAP" id="MF_01343_B">
    <property type="entry name" value="Ribosomal_uS15_B"/>
    <property type="match status" value="1"/>
</dbReference>
<dbReference type="InterPro" id="IPR000589">
    <property type="entry name" value="Ribosomal_uS15"/>
</dbReference>
<dbReference type="InterPro" id="IPR005290">
    <property type="entry name" value="Ribosomal_uS15_bac-type"/>
</dbReference>
<dbReference type="InterPro" id="IPR009068">
    <property type="entry name" value="uS15_NS1_RNA-bd_sf"/>
</dbReference>
<dbReference type="NCBIfam" id="TIGR00952">
    <property type="entry name" value="S15_bact"/>
    <property type="match status" value="1"/>
</dbReference>
<dbReference type="PANTHER" id="PTHR23321">
    <property type="entry name" value="RIBOSOMAL PROTEIN S15, BACTERIAL AND ORGANELLAR"/>
    <property type="match status" value="1"/>
</dbReference>
<dbReference type="PANTHER" id="PTHR23321:SF26">
    <property type="entry name" value="SMALL RIBOSOMAL SUBUNIT PROTEIN US15M"/>
    <property type="match status" value="1"/>
</dbReference>
<dbReference type="Pfam" id="PF00312">
    <property type="entry name" value="Ribosomal_S15"/>
    <property type="match status" value="1"/>
</dbReference>
<dbReference type="SMART" id="SM01387">
    <property type="entry name" value="Ribosomal_S15"/>
    <property type="match status" value="1"/>
</dbReference>
<dbReference type="SUPFAM" id="SSF47060">
    <property type="entry name" value="S15/NS1 RNA-binding domain"/>
    <property type="match status" value="1"/>
</dbReference>
<dbReference type="PROSITE" id="PS00362">
    <property type="entry name" value="RIBOSOMAL_S15"/>
    <property type="match status" value="1"/>
</dbReference>
<sequence>MSVADIKKSEVVAQFARGTNDTGSPEVQVALLTARIVELTGHFKTHAKDHHSRRGLLRMVSRRRKLLDYLKGKDADRYRALIEKLGLRK</sequence>
<comment type="function">
    <text evidence="1">One of the primary rRNA binding proteins, it binds directly to 16S rRNA where it helps nucleate assembly of the platform of the 30S subunit by binding and bridging several RNA helices of the 16S rRNA.</text>
</comment>
<comment type="function">
    <text evidence="1">Forms an intersubunit bridge (bridge B4) with the 23S rRNA of the 50S subunit in the ribosome.</text>
</comment>
<comment type="subunit">
    <text evidence="1">Part of the 30S ribosomal subunit. Forms a bridge to the 50S subunit in the 70S ribosome, contacting the 23S rRNA.</text>
</comment>
<comment type="similarity">
    <text evidence="1">Belongs to the universal ribosomal protein uS15 family.</text>
</comment>
<accession>A4JGD5</accession>
<evidence type="ECO:0000255" key="1">
    <source>
        <dbReference type="HAMAP-Rule" id="MF_01343"/>
    </source>
</evidence>
<evidence type="ECO:0000305" key="2"/>